<dbReference type="EC" id="6.1.1.1" evidence="1"/>
<dbReference type="EMBL" id="CP001129">
    <property type="protein sequence ID" value="ACG61488.1"/>
    <property type="molecule type" value="Genomic_DNA"/>
</dbReference>
<dbReference type="RefSeq" id="WP_012514771.1">
    <property type="nucleotide sequence ID" value="NC_011134.1"/>
</dbReference>
<dbReference type="SMR" id="B4U045"/>
<dbReference type="KEGG" id="sez:Sez_0106"/>
<dbReference type="HOGENOM" id="CLU_024003_0_3_9"/>
<dbReference type="Proteomes" id="UP000001873">
    <property type="component" value="Chromosome"/>
</dbReference>
<dbReference type="GO" id="GO:0005829">
    <property type="term" value="C:cytosol"/>
    <property type="evidence" value="ECO:0007669"/>
    <property type="project" value="TreeGrafter"/>
</dbReference>
<dbReference type="GO" id="GO:0005524">
    <property type="term" value="F:ATP binding"/>
    <property type="evidence" value="ECO:0007669"/>
    <property type="project" value="UniProtKB-UniRule"/>
</dbReference>
<dbReference type="GO" id="GO:0003723">
    <property type="term" value="F:RNA binding"/>
    <property type="evidence" value="ECO:0007669"/>
    <property type="project" value="UniProtKB-KW"/>
</dbReference>
<dbReference type="GO" id="GO:0004831">
    <property type="term" value="F:tyrosine-tRNA ligase activity"/>
    <property type="evidence" value="ECO:0007669"/>
    <property type="project" value="UniProtKB-UniRule"/>
</dbReference>
<dbReference type="GO" id="GO:0006437">
    <property type="term" value="P:tyrosyl-tRNA aminoacylation"/>
    <property type="evidence" value="ECO:0007669"/>
    <property type="project" value="UniProtKB-UniRule"/>
</dbReference>
<dbReference type="CDD" id="cd00165">
    <property type="entry name" value="S4"/>
    <property type="match status" value="1"/>
</dbReference>
<dbReference type="CDD" id="cd00805">
    <property type="entry name" value="TyrRS_core"/>
    <property type="match status" value="1"/>
</dbReference>
<dbReference type="FunFam" id="1.10.240.10:FF:000001">
    <property type="entry name" value="Tyrosine--tRNA ligase"/>
    <property type="match status" value="1"/>
</dbReference>
<dbReference type="FunFam" id="3.40.50.620:FF:000008">
    <property type="entry name" value="Tyrosine--tRNA ligase"/>
    <property type="match status" value="1"/>
</dbReference>
<dbReference type="Gene3D" id="3.40.50.620">
    <property type="entry name" value="HUPs"/>
    <property type="match status" value="1"/>
</dbReference>
<dbReference type="Gene3D" id="3.10.290.10">
    <property type="entry name" value="RNA-binding S4 domain"/>
    <property type="match status" value="1"/>
</dbReference>
<dbReference type="Gene3D" id="1.10.240.10">
    <property type="entry name" value="Tyrosyl-Transfer RNA Synthetase"/>
    <property type="match status" value="1"/>
</dbReference>
<dbReference type="HAMAP" id="MF_02006">
    <property type="entry name" value="Tyr_tRNA_synth_type1"/>
    <property type="match status" value="1"/>
</dbReference>
<dbReference type="InterPro" id="IPR001412">
    <property type="entry name" value="aa-tRNA-synth_I_CS"/>
</dbReference>
<dbReference type="InterPro" id="IPR002305">
    <property type="entry name" value="aa-tRNA-synth_Ic"/>
</dbReference>
<dbReference type="InterPro" id="IPR014729">
    <property type="entry name" value="Rossmann-like_a/b/a_fold"/>
</dbReference>
<dbReference type="InterPro" id="IPR036986">
    <property type="entry name" value="S4_RNA-bd_sf"/>
</dbReference>
<dbReference type="InterPro" id="IPR054608">
    <property type="entry name" value="SYY-like_C"/>
</dbReference>
<dbReference type="InterPro" id="IPR002307">
    <property type="entry name" value="Tyr-tRNA-ligase"/>
</dbReference>
<dbReference type="InterPro" id="IPR024088">
    <property type="entry name" value="Tyr-tRNA-ligase_bac-type"/>
</dbReference>
<dbReference type="InterPro" id="IPR024107">
    <property type="entry name" value="Tyr-tRNA-ligase_bac_1"/>
</dbReference>
<dbReference type="NCBIfam" id="TIGR00234">
    <property type="entry name" value="tyrS"/>
    <property type="match status" value="1"/>
</dbReference>
<dbReference type="PANTHER" id="PTHR11766:SF0">
    <property type="entry name" value="TYROSINE--TRNA LIGASE, MITOCHONDRIAL"/>
    <property type="match status" value="1"/>
</dbReference>
<dbReference type="PANTHER" id="PTHR11766">
    <property type="entry name" value="TYROSYL-TRNA SYNTHETASE"/>
    <property type="match status" value="1"/>
</dbReference>
<dbReference type="Pfam" id="PF22421">
    <property type="entry name" value="SYY_C-terminal"/>
    <property type="match status" value="1"/>
</dbReference>
<dbReference type="Pfam" id="PF00579">
    <property type="entry name" value="tRNA-synt_1b"/>
    <property type="match status" value="1"/>
</dbReference>
<dbReference type="PRINTS" id="PR01040">
    <property type="entry name" value="TRNASYNTHTYR"/>
</dbReference>
<dbReference type="SUPFAM" id="SSF55174">
    <property type="entry name" value="Alpha-L RNA-binding motif"/>
    <property type="match status" value="1"/>
</dbReference>
<dbReference type="SUPFAM" id="SSF52374">
    <property type="entry name" value="Nucleotidylyl transferase"/>
    <property type="match status" value="1"/>
</dbReference>
<dbReference type="PROSITE" id="PS00178">
    <property type="entry name" value="AA_TRNA_LIGASE_I"/>
    <property type="match status" value="1"/>
</dbReference>
<dbReference type="PROSITE" id="PS50889">
    <property type="entry name" value="S4"/>
    <property type="match status" value="1"/>
</dbReference>
<protein>
    <recommendedName>
        <fullName evidence="1">Tyrosine--tRNA ligase</fullName>
        <ecNumber evidence="1">6.1.1.1</ecNumber>
    </recommendedName>
    <alternativeName>
        <fullName evidence="1">Tyrosyl-tRNA synthetase</fullName>
        <shortName evidence="1">TyrRS</shortName>
    </alternativeName>
</protein>
<keyword id="KW-0030">Aminoacyl-tRNA synthetase</keyword>
<keyword id="KW-0067">ATP-binding</keyword>
<keyword id="KW-0963">Cytoplasm</keyword>
<keyword id="KW-0436">Ligase</keyword>
<keyword id="KW-0547">Nucleotide-binding</keyword>
<keyword id="KW-0648">Protein biosynthesis</keyword>
<keyword id="KW-0694">RNA-binding</keyword>
<comment type="function">
    <text evidence="1">Catalyzes the attachment of tyrosine to tRNA(Tyr) in a two-step reaction: tyrosine is first activated by ATP to form Tyr-AMP and then transferred to the acceptor end of tRNA(Tyr).</text>
</comment>
<comment type="catalytic activity">
    <reaction evidence="1">
        <text>tRNA(Tyr) + L-tyrosine + ATP = L-tyrosyl-tRNA(Tyr) + AMP + diphosphate + H(+)</text>
        <dbReference type="Rhea" id="RHEA:10220"/>
        <dbReference type="Rhea" id="RHEA-COMP:9706"/>
        <dbReference type="Rhea" id="RHEA-COMP:9707"/>
        <dbReference type="ChEBI" id="CHEBI:15378"/>
        <dbReference type="ChEBI" id="CHEBI:30616"/>
        <dbReference type="ChEBI" id="CHEBI:33019"/>
        <dbReference type="ChEBI" id="CHEBI:58315"/>
        <dbReference type="ChEBI" id="CHEBI:78442"/>
        <dbReference type="ChEBI" id="CHEBI:78536"/>
        <dbReference type="ChEBI" id="CHEBI:456215"/>
        <dbReference type="EC" id="6.1.1.1"/>
    </reaction>
</comment>
<comment type="subunit">
    <text evidence="1">Homodimer.</text>
</comment>
<comment type="subcellular location">
    <subcellularLocation>
        <location evidence="1">Cytoplasm</location>
    </subcellularLocation>
</comment>
<comment type="similarity">
    <text evidence="1">Belongs to the class-I aminoacyl-tRNA synthetase family. TyrS type 1 subfamily.</text>
</comment>
<feature type="chain" id="PRO_1000189333" description="Tyrosine--tRNA ligase">
    <location>
        <begin position="1"/>
        <end position="418"/>
    </location>
</feature>
<feature type="domain" description="S4 RNA-binding" evidence="1">
    <location>
        <begin position="352"/>
        <end position="418"/>
    </location>
</feature>
<feature type="short sequence motif" description="'HIGH' region">
    <location>
        <begin position="39"/>
        <end position="48"/>
    </location>
</feature>
<feature type="short sequence motif" description="'KMSKS' region">
    <location>
        <begin position="229"/>
        <end position="233"/>
    </location>
</feature>
<feature type="binding site" evidence="1">
    <location>
        <position position="34"/>
    </location>
    <ligand>
        <name>L-tyrosine</name>
        <dbReference type="ChEBI" id="CHEBI:58315"/>
    </ligand>
</feature>
<feature type="binding site" evidence="1">
    <location>
        <position position="169"/>
    </location>
    <ligand>
        <name>L-tyrosine</name>
        <dbReference type="ChEBI" id="CHEBI:58315"/>
    </ligand>
</feature>
<feature type="binding site" evidence="1">
    <location>
        <position position="173"/>
    </location>
    <ligand>
        <name>L-tyrosine</name>
        <dbReference type="ChEBI" id="CHEBI:58315"/>
    </ligand>
</feature>
<feature type="binding site" evidence="1">
    <location>
        <position position="232"/>
    </location>
    <ligand>
        <name>ATP</name>
        <dbReference type="ChEBI" id="CHEBI:30616"/>
    </ligand>
</feature>
<accession>B4U045</accession>
<reference key="1">
    <citation type="journal article" date="2008" name="PLoS ONE">
        <title>Genome sequence of a lancefield group C Streptococcus zooepidemicus strain causing epidemic nephritis: new information about an old disease.</title>
        <authorList>
            <person name="Beres S.B."/>
            <person name="Sesso R."/>
            <person name="Pinto S.W.L."/>
            <person name="Hoe N.P."/>
            <person name="Porcella S.F."/>
            <person name="Deleo F.R."/>
            <person name="Musser J.M."/>
        </authorList>
    </citation>
    <scope>NUCLEOTIDE SEQUENCE [LARGE SCALE GENOMIC DNA]</scope>
    <source>
        <strain>MGCS10565</strain>
    </source>
</reference>
<name>SYY_STREM</name>
<organism>
    <name type="scientific">Streptococcus equi subsp. zooepidemicus (strain MGCS10565)</name>
    <dbReference type="NCBI Taxonomy" id="552526"/>
    <lineage>
        <taxon>Bacteria</taxon>
        <taxon>Bacillati</taxon>
        <taxon>Bacillota</taxon>
        <taxon>Bacilli</taxon>
        <taxon>Lactobacillales</taxon>
        <taxon>Streptococcaceae</taxon>
        <taxon>Streptococcus</taxon>
    </lineage>
</organism>
<evidence type="ECO:0000255" key="1">
    <source>
        <dbReference type="HAMAP-Rule" id="MF_02006"/>
    </source>
</evidence>
<sequence>MNIFEELKARGLVFQTTDEEALVKALTEGQVSYYTGYDPTADSLHLGHLVAILTSRRLQLAGHKPYALVGGATGLIGDPSFKDAERILQTKETVLDWSQKIKEQLSCFLDFDNGENKAELVNNYDWFSQISFIDFLRDVGKHFTVNYMMSKDSVKKRIETGISYTEFAYQVMQGYDFYELNAKHNVTLQIGGSDQWGNMTAGTELLRKKADKTGHVMTVPLITDATGKKFGKSEGNAIWLDAKKTSPYEMYQFWLNVMDDDAVRFLKIFTFLSLDEIAAIEEQFNAARHERLAQKTLAREVVTLVHGEAAYQQALNITEQLFAGAIKNLSAAELKQGLSNVPNYQVQAEDSLNIVDMLVTAGISPSKRQAREDLQNGAIYLNGERLQDLDYSLSTADRIDNQLTVIRRGKKKYAVLTY</sequence>
<gene>
    <name evidence="1" type="primary">tyrS</name>
    <name type="ordered locus">Sez_0106</name>
</gene>
<proteinExistence type="inferred from homology"/>